<dbReference type="EMBL" id="AY071844">
    <property type="protein sequence ID" value="AAL67155.1"/>
    <property type="molecule type" value="mRNA"/>
</dbReference>
<dbReference type="CCDS" id="CCDS15735.1"/>
<dbReference type="RefSeq" id="NP_694717.1">
    <property type="nucleotide sequence ID" value="NM_153077.3"/>
</dbReference>
<dbReference type="PDB" id="8Q3J">
    <property type="method" value="X-ray"/>
    <property type="resolution" value="2.50 A"/>
    <property type="chains" value="A/D=1-152"/>
</dbReference>
<dbReference type="PDBsum" id="8Q3J"/>
<dbReference type="SMR" id="Q8R459"/>
<dbReference type="FunCoup" id="Q8R459">
    <property type="interactions" value="635"/>
</dbReference>
<dbReference type="STRING" id="10090.ENSMUSP00000063004"/>
<dbReference type="PhosphoSitePlus" id="Q8R459"/>
<dbReference type="PaxDb" id="10090-ENSMUSP00000063004"/>
<dbReference type="ProteomicsDB" id="269392"/>
<dbReference type="Antibodypedia" id="47548">
    <property type="antibodies" value="183 antibodies from 26 providers"/>
</dbReference>
<dbReference type="DNASU" id="215274"/>
<dbReference type="Ensembl" id="ENSMUST00000058056.2">
    <property type="protein sequence ID" value="ENSMUSP00000063004.2"/>
    <property type="gene ID" value="ENSMUSG00000046845.2"/>
</dbReference>
<dbReference type="GeneID" id="215274"/>
<dbReference type="KEGG" id="mmu:215274"/>
<dbReference type="UCSC" id="uc008iou.1">
    <property type="organism name" value="mouse"/>
</dbReference>
<dbReference type="AGR" id="MGI:2652548"/>
<dbReference type="CTD" id="84639"/>
<dbReference type="MGI" id="MGI:2652548">
    <property type="gene designation" value="Il1f10"/>
</dbReference>
<dbReference type="VEuPathDB" id="HostDB:ENSMUSG00000046845"/>
<dbReference type="eggNOG" id="ENOG502SN3A">
    <property type="taxonomic scope" value="Eukaryota"/>
</dbReference>
<dbReference type="GeneTree" id="ENSGT00950000182943"/>
<dbReference type="HOGENOM" id="CLU_095373_2_0_1"/>
<dbReference type="InParanoid" id="Q8R459"/>
<dbReference type="OMA" id="QFYFEQS"/>
<dbReference type="OrthoDB" id="9435517at2759"/>
<dbReference type="PhylomeDB" id="Q8R459"/>
<dbReference type="TreeFam" id="TF300203"/>
<dbReference type="Reactome" id="R-MMU-9007892">
    <property type="pathway name" value="Interleukin-38 signaling"/>
</dbReference>
<dbReference type="Reactome" id="R-MMU-9014826">
    <property type="pathway name" value="Interleukin-36 pathway"/>
</dbReference>
<dbReference type="BioGRID-ORCS" id="215274">
    <property type="hits" value="1 hit in 76 CRISPR screens"/>
</dbReference>
<dbReference type="PRO" id="PR:Q8R459"/>
<dbReference type="Proteomes" id="UP000000589">
    <property type="component" value="Chromosome 2"/>
</dbReference>
<dbReference type="RNAct" id="Q8R459">
    <property type="molecule type" value="protein"/>
</dbReference>
<dbReference type="Bgee" id="ENSMUSG00000046845">
    <property type="expression patterns" value="Expressed in lip and 7 other cell types or tissues"/>
</dbReference>
<dbReference type="ExpressionAtlas" id="Q8R459">
    <property type="expression patterns" value="baseline and differential"/>
</dbReference>
<dbReference type="GO" id="GO:0005793">
    <property type="term" value="C:endoplasmic reticulum-Golgi intermediate compartment"/>
    <property type="evidence" value="ECO:0007669"/>
    <property type="project" value="UniProtKB-SubCell"/>
</dbReference>
<dbReference type="GO" id="GO:0005615">
    <property type="term" value="C:extracellular space"/>
    <property type="evidence" value="ECO:0007669"/>
    <property type="project" value="UniProtKB-KW"/>
</dbReference>
<dbReference type="GO" id="GO:0005125">
    <property type="term" value="F:cytokine activity"/>
    <property type="evidence" value="ECO:0007669"/>
    <property type="project" value="UniProtKB-KW"/>
</dbReference>
<dbReference type="GO" id="GO:0005149">
    <property type="term" value="F:interleukin-1 receptor binding"/>
    <property type="evidence" value="ECO:0007669"/>
    <property type="project" value="InterPro"/>
</dbReference>
<dbReference type="GO" id="GO:0006955">
    <property type="term" value="P:immune response"/>
    <property type="evidence" value="ECO:0007669"/>
    <property type="project" value="InterPro"/>
</dbReference>
<dbReference type="GO" id="GO:0006954">
    <property type="term" value="P:inflammatory response"/>
    <property type="evidence" value="ECO:0007669"/>
    <property type="project" value="InterPro"/>
</dbReference>
<dbReference type="CDD" id="cd23302">
    <property type="entry name" value="beta-trefoil_IL38"/>
    <property type="match status" value="1"/>
</dbReference>
<dbReference type="FunFam" id="2.80.10.50:FF:000013">
    <property type="entry name" value="Interleukin-1"/>
    <property type="match status" value="1"/>
</dbReference>
<dbReference type="Gene3D" id="2.80.10.50">
    <property type="match status" value="1"/>
</dbReference>
<dbReference type="InterPro" id="IPR000975">
    <property type="entry name" value="IL-1_fam"/>
</dbReference>
<dbReference type="InterPro" id="IPR003297">
    <property type="entry name" value="IL-1RA/IL-36"/>
</dbReference>
<dbReference type="InterPro" id="IPR008996">
    <property type="entry name" value="IL1/FGF"/>
</dbReference>
<dbReference type="PANTHER" id="PTHR10078">
    <property type="entry name" value="INTERLEUKIN-1 FAMILY MEMBER"/>
    <property type="match status" value="1"/>
</dbReference>
<dbReference type="PANTHER" id="PTHR10078:SF29">
    <property type="entry name" value="INTERLEUKIN-1 FAMILY MEMBER 10"/>
    <property type="match status" value="1"/>
</dbReference>
<dbReference type="Pfam" id="PF00340">
    <property type="entry name" value="IL1"/>
    <property type="match status" value="1"/>
</dbReference>
<dbReference type="PRINTS" id="PR00264">
    <property type="entry name" value="INTERLEUKIN1"/>
</dbReference>
<dbReference type="PRINTS" id="PR01360">
    <property type="entry name" value="INTRLEUKIN1X"/>
</dbReference>
<dbReference type="SMART" id="SM00125">
    <property type="entry name" value="IL1"/>
    <property type="match status" value="1"/>
</dbReference>
<dbReference type="SUPFAM" id="SSF50353">
    <property type="entry name" value="Cytokine"/>
    <property type="match status" value="1"/>
</dbReference>
<accession>Q8R459</accession>
<protein>
    <recommendedName>
        <fullName>Interleukin-1 family member 10</fullName>
        <shortName>IL-1F10</shortName>
    </recommendedName>
</protein>
<reference key="1">
    <citation type="journal article" date="2002" name="Genomics">
        <title>Genomic organization of the interleukin-1 locus.</title>
        <authorList>
            <person name="Taylor S.L."/>
            <person name="Renshaw B.R."/>
            <person name="Garka K.E."/>
            <person name="Smith D.E."/>
            <person name="Sims J.E."/>
        </authorList>
    </citation>
    <scope>NUCLEOTIDE SEQUENCE [MRNA]</scope>
    <source>
        <strain>Swiss Webster / NIH</strain>
    </source>
</reference>
<keyword id="KW-0002">3D-structure</keyword>
<keyword id="KW-0202">Cytokine</keyword>
<keyword id="KW-0963">Cytoplasm</keyword>
<keyword id="KW-1185">Reference proteome</keyword>
<keyword id="KW-0964">Secreted</keyword>
<comment type="function">
    <text evidence="1">Cytokine with immunomodulatory activity. Alone, does not induce cytokine production, but reduces IL22 and IL17A production by T-cells in response to heat-killed Candida albicans. Reduces IL36G-induced production of IL8 by peripheral blood mononuclear cells. Increases IL6 production by dendritic cells stimulated by bacterial lipopolysaccharides (LPS). Ligand for IL-36R/IL1RL2 (By similarity).</text>
</comment>
<comment type="subunit">
    <text evidence="2">Interacts with cargo receptor TMED10; the interaction mediates the translocation from the cytoplasm into the ERGIC (endoplasmic reticulum-Golgi intermediate compartment) and thereby secretion.</text>
</comment>
<comment type="subcellular location">
    <subcellularLocation>
        <location evidence="2">Cytoplasm</location>
    </subcellularLocation>
    <subcellularLocation>
        <location evidence="2">Endoplasmic reticulum-Golgi intermediate compartment</location>
    </subcellularLocation>
    <subcellularLocation>
        <location evidence="2">Secreted</location>
    </subcellularLocation>
    <text evidence="2">The secretion is dependent on protein unfolding and facilitated by the cargo receptor TMED10; it results in protein translocation from the cytoplasm into the ERGIC (endoplasmic reticulum-Golgi intermediate compartment) followed by vesicle entry and secretion.</text>
</comment>
<comment type="similarity">
    <text evidence="3">Belongs to the IL-1 family.</text>
</comment>
<feature type="chain" id="PRO_0000153651" description="Interleukin-1 family member 10">
    <location>
        <begin position="1"/>
        <end position="152"/>
    </location>
</feature>
<feature type="strand" evidence="4">
    <location>
        <begin position="8"/>
        <end position="14"/>
    </location>
</feature>
<feature type="strand" evidence="4">
    <location>
        <begin position="19"/>
        <end position="23"/>
    </location>
</feature>
<feature type="strand" evidence="4">
    <location>
        <begin position="26"/>
        <end position="30"/>
    </location>
</feature>
<feature type="strand" evidence="4">
    <location>
        <begin position="42"/>
        <end position="46"/>
    </location>
</feature>
<feature type="helix" evidence="4">
    <location>
        <begin position="52"/>
        <end position="54"/>
    </location>
</feature>
<feature type="strand" evidence="4">
    <location>
        <begin position="56"/>
        <end position="61"/>
    </location>
</feature>
<feature type="turn" evidence="4">
    <location>
        <begin position="62"/>
        <end position="65"/>
    </location>
</feature>
<feature type="strand" evidence="4">
    <location>
        <begin position="66"/>
        <end position="73"/>
    </location>
</feature>
<feature type="strand" evidence="4">
    <location>
        <begin position="76"/>
        <end position="83"/>
    </location>
</feature>
<feature type="helix" evidence="4">
    <location>
        <begin position="86"/>
        <end position="91"/>
    </location>
</feature>
<feature type="helix" evidence="4">
    <location>
        <begin position="94"/>
        <end position="99"/>
    </location>
</feature>
<feature type="strand" evidence="4">
    <location>
        <begin position="100"/>
        <end position="106"/>
    </location>
</feature>
<feature type="strand" evidence="4">
    <location>
        <begin position="109"/>
        <end position="114"/>
    </location>
</feature>
<feature type="strand" evidence="4">
    <location>
        <begin position="121"/>
        <end position="123"/>
    </location>
</feature>
<feature type="strand" evidence="4">
    <location>
        <begin position="133"/>
        <end position="135"/>
    </location>
</feature>
<feature type="helix" evidence="4">
    <location>
        <begin position="142"/>
        <end position="144"/>
    </location>
</feature>
<feature type="strand" evidence="4">
    <location>
        <begin position="146"/>
        <end position="149"/>
    </location>
</feature>
<organism>
    <name type="scientific">Mus musculus</name>
    <name type="common">Mouse</name>
    <dbReference type="NCBI Taxonomy" id="10090"/>
    <lineage>
        <taxon>Eukaryota</taxon>
        <taxon>Metazoa</taxon>
        <taxon>Chordata</taxon>
        <taxon>Craniata</taxon>
        <taxon>Vertebrata</taxon>
        <taxon>Euteleostomi</taxon>
        <taxon>Mammalia</taxon>
        <taxon>Eutheria</taxon>
        <taxon>Euarchontoglires</taxon>
        <taxon>Glires</taxon>
        <taxon>Rodentia</taxon>
        <taxon>Myomorpha</taxon>
        <taxon>Muroidea</taxon>
        <taxon>Muridae</taxon>
        <taxon>Murinae</taxon>
        <taxon>Mus</taxon>
        <taxon>Mus</taxon>
    </lineage>
</organism>
<proteinExistence type="evidence at protein level"/>
<gene>
    <name type="primary">Il1f10</name>
</gene>
<sequence length="152" mass="17078">MCSLPMARYYIIKDAHQKALYTRNGQLLLGDPDSDNYSPEKVCILPNRGLDRSKVPIFLGMQGGSCCLACVKTREGPLLQLEDVNIEDLYKGGEQTTRFTFFQRSLGSAFRLEAAACPGWFLCGPAEPQQPVQLTKESEPSTHTEFYFEMSR</sequence>
<evidence type="ECO:0000250" key="1"/>
<evidence type="ECO:0000250" key="2">
    <source>
        <dbReference type="UniProtKB" id="Q8WWZ1"/>
    </source>
</evidence>
<evidence type="ECO:0000305" key="3"/>
<evidence type="ECO:0007829" key="4">
    <source>
        <dbReference type="PDB" id="8Q3J"/>
    </source>
</evidence>
<name>IL1FA_MOUSE</name>